<feature type="chain" id="PRO_0000187801" description="Peptidyl-tRNA hydrolase">
    <location>
        <begin position="1"/>
        <end position="239"/>
    </location>
</feature>
<feature type="active site" description="Proton acceptor" evidence="1">
    <location>
        <position position="19"/>
    </location>
</feature>
<feature type="binding site" evidence="1">
    <location>
        <position position="14"/>
    </location>
    <ligand>
        <name>tRNA</name>
        <dbReference type="ChEBI" id="CHEBI:17843"/>
    </ligand>
</feature>
<feature type="binding site" evidence="1">
    <location>
        <position position="64"/>
    </location>
    <ligand>
        <name>tRNA</name>
        <dbReference type="ChEBI" id="CHEBI:17843"/>
    </ligand>
</feature>
<feature type="binding site" evidence="1">
    <location>
        <position position="66"/>
    </location>
    <ligand>
        <name>tRNA</name>
        <dbReference type="ChEBI" id="CHEBI:17843"/>
    </ligand>
</feature>
<feature type="binding site" evidence="1">
    <location>
        <position position="112"/>
    </location>
    <ligand>
        <name>tRNA</name>
        <dbReference type="ChEBI" id="CHEBI:17843"/>
    </ligand>
</feature>
<feature type="site" description="Discriminates between blocked and unblocked aminoacyl-tRNA" evidence="1">
    <location>
        <position position="9"/>
    </location>
</feature>
<feature type="site" description="Stabilizes the basic form of H active site to accept a proton" evidence="1">
    <location>
        <position position="91"/>
    </location>
</feature>
<dbReference type="EC" id="3.1.1.29" evidence="1"/>
<dbReference type="EMBL" id="AL591688">
    <property type="protein sequence ID" value="CAC46934.1"/>
    <property type="molecule type" value="Genomic_DNA"/>
</dbReference>
<dbReference type="RefSeq" id="NP_386461.1">
    <property type="nucleotide sequence ID" value="NC_003047.1"/>
</dbReference>
<dbReference type="RefSeq" id="WP_010969874.1">
    <property type="nucleotide sequence ID" value="NC_003047.1"/>
</dbReference>
<dbReference type="SMR" id="Q92N67"/>
<dbReference type="EnsemblBacteria" id="CAC46934">
    <property type="protein sequence ID" value="CAC46934"/>
    <property type="gene ID" value="SMc02693"/>
</dbReference>
<dbReference type="KEGG" id="sme:SMc02693"/>
<dbReference type="PATRIC" id="fig|266834.11.peg.3836"/>
<dbReference type="eggNOG" id="COG0193">
    <property type="taxonomic scope" value="Bacteria"/>
</dbReference>
<dbReference type="HOGENOM" id="CLU_062456_1_1_5"/>
<dbReference type="OrthoDB" id="9800507at2"/>
<dbReference type="Proteomes" id="UP000001976">
    <property type="component" value="Chromosome"/>
</dbReference>
<dbReference type="GO" id="GO:0005737">
    <property type="term" value="C:cytoplasm"/>
    <property type="evidence" value="ECO:0007669"/>
    <property type="project" value="UniProtKB-SubCell"/>
</dbReference>
<dbReference type="GO" id="GO:0004045">
    <property type="term" value="F:peptidyl-tRNA hydrolase activity"/>
    <property type="evidence" value="ECO:0007669"/>
    <property type="project" value="UniProtKB-UniRule"/>
</dbReference>
<dbReference type="GO" id="GO:0000049">
    <property type="term" value="F:tRNA binding"/>
    <property type="evidence" value="ECO:0007669"/>
    <property type="project" value="UniProtKB-UniRule"/>
</dbReference>
<dbReference type="GO" id="GO:0006515">
    <property type="term" value="P:protein quality control for misfolded or incompletely synthesized proteins"/>
    <property type="evidence" value="ECO:0007669"/>
    <property type="project" value="UniProtKB-UniRule"/>
</dbReference>
<dbReference type="GO" id="GO:0072344">
    <property type="term" value="P:rescue of stalled ribosome"/>
    <property type="evidence" value="ECO:0007669"/>
    <property type="project" value="UniProtKB-UniRule"/>
</dbReference>
<dbReference type="CDD" id="cd00462">
    <property type="entry name" value="PTH"/>
    <property type="match status" value="1"/>
</dbReference>
<dbReference type="FunFam" id="3.40.50.1470:FF:000001">
    <property type="entry name" value="Peptidyl-tRNA hydrolase"/>
    <property type="match status" value="1"/>
</dbReference>
<dbReference type="Gene3D" id="3.40.50.1470">
    <property type="entry name" value="Peptidyl-tRNA hydrolase"/>
    <property type="match status" value="1"/>
</dbReference>
<dbReference type="HAMAP" id="MF_00083">
    <property type="entry name" value="Pept_tRNA_hydro_bact"/>
    <property type="match status" value="1"/>
</dbReference>
<dbReference type="InterPro" id="IPR001328">
    <property type="entry name" value="Pept_tRNA_hydro"/>
</dbReference>
<dbReference type="InterPro" id="IPR018171">
    <property type="entry name" value="Pept_tRNA_hydro_CS"/>
</dbReference>
<dbReference type="InterPro" id="IPR036416">
    <property type="entry name" value="Pept_tRNA_hydro_sf"/>
</dbReference>
<dbReference type="NCBIfam" id="TIGR00447">
    <property type="entry name" value="pth"/>
    <property type="match status" value="1"/>
</dbReference>
<dbReference type="PANTHER" id="PTHR17224">
    <property type="entry name" value="PEPTIDYL-TRNA HYDROLASE"/>
    <property type="match status" value="1"/>
</dbReference>
<dbReference type="PANTHER" id="PTHR17224:SF1">
    <property type="entry name" value="PEPTIDYL-TRNA HYDROLASE"/>
    <property type="match status" value="1"/>
</dbReference>
<dbReference type="Pfam" id="PF01195">
    <property type="entry name" value="Pept_tRNA_hydro"/>
    <property type="match status" value="1"/>
</dbReference>
<dbReference type="SUPFAM" id="SSF53178">
    <property type="entry name" value="Peptidyl-tRNA hydrolase-like"/>
    <property type="match status" value="1"/>
</dbReference>
<dbReference type="PROSITE" id="PS01195">
    <property type="entry name" value="PEPT_TRNA_HYDROL_1"/>
    <property type="match status" value="1"/>
</dbReference>
<dbReference type="PROSITE" id="PS01196">
    <property type="entry name" value="PEPT_TRNA_HYDROL_2"/>
    <property type="match status" value="1"/>
</dbReference>
<gene>
    <name evidence="1" type="primary">pth</name>
    <name type="ordered locus">R02355</name>
    <name type="ORF">SMc02693</name>
</gene>
<accession>Q92N67</accession>
<proteinExistence type="inferred from homology"/>
<evidence type="ECO:0000255" key="1">
    <source>
        <dbReference type="HAMAP-Rule" id="MF_00083"/>
    </source>
</evidence>
<name>PTH_RHIME</name>
<organism>
    <name type="scientific">Rhizobium meliloti (strain 1021)</name>
    <name type="common">Ensifer meliloti</name>
    <name type="synonym">Sinorhizobium meliloti</name>
    <dbReference type="NCBI Taxonomy" id="266834"/>
    <lineage>
        <taxon>Bacteria</taxon>
        <taxon>Pseudomonadati</taxon>
        <taxon>Pseudomonadota</taxon>
        <taxon>Alphaproteobacteria</taxon>
        <taxon>Hyphomicrobiales</taxon>
        <taxon>Rhizobiaceae</taxon>
        <taxon>Sinorhizobium/Ensifer group</taxon>
        <taxon>Sinorhizobium</taxon>
    </lineage>
</organism>
<reference key="1">
    <citation type="journal article" date="2001" name="Proc. Natl. Acad. Sci. U.S.A.">
        <title>Analysis of the chromosome sequence of the legume symbiont Sinorhizobium meliloti strain 1021.</title>
        <authorList>
            <person name="Capela D."/>
            <person name="Barloy-Hubler F."/>
            <person name="Gouzy J."/>
            <person name="Bothe G."/>
            <person name="Ampe F."/>
            <person name="Batut J."/>
            <person name="Boistard P."/>
            <person name="Becker A."/>
            <person name="Boutry M."/>
            <person name="Cadieu E."/>
            <person name="Dreano S."/>
            <person name="Gloux S."/>
            <person name="Godrie T."/>
            <person name="Goffeau A."/>
            <person name="Kahn D."/>
            <person name="Kiss E."/>
            <person name="Lelaure V."/>
            <person name="Masuy D."/>
            <person name="Pohl T."/>
            <person name="Portetelle D."/>
            <person name="Puehler A."/>
            <person name="Purnelle B."/>
            <person name="Ramsperger U."/>
            <person name="Renard C."/>
            <person name="Thebault P."/>
            <person name="Vandenbol M."/>
            <person name="Weidner S."/>
            <person name="Galibert F."/>
        </authorList>
    </citation>
    <scope>NUCLEOTIDE SEQUENCE [LARGE SCALE GENOMIC DNA]</scope>
    <source>
        <strain>1021</strain>
    </source>
</reference>
<reference key="2">
    <citation type="journal article" date="2001" name="Science">
        <title>The composite genome of the legume symbiont Sinorhizobium meliloti.</title>
        <authorList>
            <person name="Galibert F."/>
            <person name="Finan T.M."/>
            <person name="Long S.R."/>
            <person name="Puehler A."/>
            <person name="Abola P."/>
            <person name="Ampe F."/>
            <person name="Barloy-Hubler F."/>
            <person name="Barnett M.J."/>
            <person name="Becker A."/>
            <person name="Boistard P."/>
            <person name="Bothe G."/>
            <person name="Boutry M."/>
            <person name="Bowser L."/>
            <person name="Buhrmester J."/>
            <person name="Cadieu E."/>
            <person name="Capela D."/>
            <person name="Chain P."/>
            <person name="Cowie A."/>
            <person name="Davis R.W."/>
            <person name="Dreano S."/>
            <person name="Federspiel N.A."/>
            <person name="Fisher R.F."/>
            <person name="Gloux S."/>
            <person name="Godrie T."/>
            <person name="Goffeau A."/>
            <person name="Golding B."/>
            <person name="Gouzy J."/>
            <person name="Gurjal M."/>
            <person name="Hernandez-Lucas I."/>
            <person name="Hong A."/>
            <person name="Huizar L."/>
            <person name="Hyman R.W."/>
            <person name="Jones T."/>
            <person name="Kahn D."/>
            <person name="Kahn M.L."/>
            <person name="Kalman S."/>
            <person name="Keating D.H."/>
            <person name="Kiss E."/>
            <person name="Komp C."/>
            <person name="Lelaure V."/>
            <person name="Masuy D."/>
            <person name="Palm C."/>
            <person name="Peck M.C."/>
            <person name="Pohl T.M."/>
            <person name="Portetelle D."/>
            <person name="Purnelle B."/>
            <person name="Ramsperger U."/>
            <person name="Surzycki R."/>
            <person name="Thebault P."/>
            <person name="Vandenbol M."/>
            <person name="Vorhoelter F.J."/>
            <person name="Weidner S."/>
            <person name="Wells D.H."/>
            <person name="Wong K."/>
            <person name="Yeh K.-C."/>
            <person name="Batut J."/>
        </authorList>
    </citation>
    <scope>NUCLEOTIDE SEQUENCE [LARGE SCALE GENOMIC DNA]</scope>
    <source>
        <strain>1021</strain>
    </source>
</reference>
<comment type="function">
    <text evidence="1">Hydrolyzes ribosome-free peptidyl-tRNAs (with 1 or more amino acids incorporated), which drop off the ribosome during protein synthesis, or as a result of ribosome stalling.</text>
</comment>
<comment type="function">
    <text evidence="1">Catalyzes the release of premature peptidyl moieties from peptidyl-tRNA molecules trapped in stalled 50S ribosomal subunits, and thus maintains levels of free tRNAs and 50S ribosomes.</text>
</comment>
<comment type="catalytic activity">
    <reaction evidence="1">
        <text>an N-acyl-L-alpha-aminoacyl-tRNA + H2O = an N-acyl-L-amino acid + a tRNA + H(+)</text>
        <dbReference type="Rhea" id="RHEA:54448"/>
        <dbReference type="Rhea" id="RHEA-COMP:10123"/>
        <dbReference type="Rhea" id="RHEA-COMP:13883"/>
        <dbReference type="ChEBI" id="CHEBI:15377"/>
        <dbReference type="ChEBI" id="CHEBI:15378"/>
        <dbReference type="ChEBI" id="CHEBI:59874"/>
        <dbReference type="ChEBI" id="CHEBI:78442"/>
        <dbReference type="ChEBI" id="CHEBI:138191"/>
        <dbReference type="EC" id="3.1.1.29"/>
    </reaction>
</comment>
<comment type="subunit">
    <text evidence="1">Monomer.</text>
</comment>
<comment type="subcellular location">
    <subcellularLocation>
        <location evidence="1">Cytoplasm</location>
    </subcellularLocation>
</comment>
<comment type="similarity">
    <text evidence="1">Belongs to the PTH family.</text>
</comment>
<protein>
    <recommendedName>
        <fullName evidence="1">Peptidyl-tRNA hydrolase</fullName>
        <shortName evidence="1">Pth</shortName>
        <ecNumber evidence="1">3.1.1.29</ecNumber>
    </recommendedName>
</protein>
<sequence>MLIIAGLGNPGPKYAGNRHNIGFMAVDAIQRRQGFSAWSRKFKSEVSEGEIDGERVLLMKPQTFMNLSGEALGDAMRFYKLAPKDIVVIYDELDLPAGKARIKTGGGHGGHNGIKSIDAHCGKEYRRLRLGIGHPGVKDLVHAHVLGDFAKADQAWLSLLLEAIADNAAMLVKGEDSQLMNKIALATGGKPETEKPVAVKKQAAQSHIHQARATAQPKKLPVTGPMADMLKKMFGPKGD</sequence>
<keyword id="KW-0963">Cytoplasm</keyword>
<keyword id="KW-0378">Hydrolase</keyword>
<keyword id="KW-1185">Reference proteome</keyword>
<keyword id="KW-0694">RNA-binding</keyword>
<keyword id="KW-0820">tRNA-binding</keyword>